<name>ATPE_POLSJ</name>
<dbReference type="EMBL" id="CP000316">
    <property type="protein sequence ID" value="ABE42293.1"/>
    <property type="molecule type" value="Genomic_DNA"/>
</dbReference>
<dbReference type="RefSeq" id="WP_011481300.1">
    <property type="nucleotide sequence ID" value="NC_007948.1"/>
</dbReference>
<dbReference type="SMR" id="Q12GP9"/>
<dbReference type="STRING" id="296591.Bpro_0328"/>
<dbReference type="KEGG" id="pol:Bpro_0328"/>
<dbReference type="eggNOG" id="COG0355">
    <property type="taxonomic scope" value="Bacteria"/>
</dbReference>
<dbReference type="HOGENOM" id="CLU_084338_2_0_4"/>
<dbReference type="OrthoDB" id="9791445at2"/>
<dbReference type="Proteomes" id="UP000001983">
    <property type="component" value="Chromosome"/>
</dbReference>
<dbReference type="GO" id="GO:0005886">
    <property type="term" value="C:plasma membrane"/>
    <property type="evidence" value="ECO:0007669"/>
    <property type="project" value="UniProtKB-SubCell"/>
</dbReference>
<dbReference type="GO" id="GO:0045259">
    <property type="term" value="C:proton-transporting ATP synthase complex"/>
    <property type="evidence" value="ECO:0007669"/>
    <property type="project" value="UniProtKB-KW"/>
</dbReference>
<dbReference type="GO" id="GO:0005524">
    <property type="term" value="F:ATP binding"/>
    <property type="evidence" value="ECO:0007669"/>
    <property type="project" value="UniProtKB-UniRule"/>
</dbReference>
<dbReference type="GO" id="GO:0046933">
    <property type="term" value="F:proton-transporting ATP synthase activity, rotational mechanism"/>
    <property type="evidence" value="ECO:0007669"/>
    <property type="project" value="UniProtKB-UniRule"/>
</dbReference>
<dbReference type="CDD" id="cd12152">
    <property type="entry name" value="F1-ATPase_delta"/>
    <property type="match status" value="1"/>
</dbReference>
<dbReference type="FunFam" id="2.60.15.10:FF:000001">
    <property type="entry name" value="ATP synthase epsilon chain"/>
    <property type="match status" value="1"/>
</dbReference>
<dbReference type="Gene3D" id="1.20.5.440">
    <property type="entry name" value="ATP synthase delta/epsilon subunit, C-terminal domain"/>
    <property type="match status" value="1"/>
</dbReference>
<dbReference type="Gene3D" id="2.60.15.10">
    <property type="entry name" value="F0F1 ATP synthase delta/epsilon subunit, N-terminal"/>
    <property type="match status" value="1"/>
</dbReference>
<dbReference type="HAMAP" id="MF_00530">
    <property type="entry name" value="ATP_synth_epsil_bac"/>
    <property type="match status" value="1"/>
</dbReference>
<dbReference type="InterPro" id="IPR036794">
    <property type="entry name" value="ATP_F1_dsu/esu_C_sf"/>
</dbReference>
<dbReference type="InterPro" id="IPR001469">
    <property type="entry name" value="ATP_synth_F1_dsu/esu"/>
</dbReference>
<dbReference type="InterPro" id="IPR020546">
    <property type="entry name" value="ATP_synth_F1_dsu/esu_N"/>
</dbReference>
<dbReference type="InterPro" id="IPR020547">
    <property type="entry name" value="ATP_synth_F1_esu_C"/>
</dbReference>
<dbReference type="InterPro" id="IPR036771">
    <property type="entry name" value="ATPsynth_dsu/esu_N"/>
</dbReference>
<dbReference type="NCBIfam" id="TIGR01216">
    <property type="entry name" value="ATP_synt_epsi"/>
    <property type="match status" value="1"/>
</dbReference>
<dbReference type="NCBIfam" id="NF001847">
    <property type="entry name" value="PRK00571.1-4"/>
    <property type="match status" value="1"/>
</dbReference>
<dbReference type="PANTHER" id="PTHR13822">
    <property type="entry name" value="ATP SYNTHASE DELTA/EPSILON CHAIN"/>
    <property type="match status" value="1"/>
</dbReference>
<dbReference type="PANTHER" id="PTHR13822:SF10">
    <property type="entry name" value="ATP SYNTHASE EPSILON CHAIN, CHLOROPLASTIC"/>
    <property type="match status" value="1"/>
</dbReference>
<dbReference type="Pfam" id="PF00401">
    <property type="entry name" value="ATP-synt_DE"/>
    <property type="match status" value="1"/>
</dbReference>
<dbReference type="Pfam" id="PF02823">
    <property type="entry name" value="ATP-synt_DE_N"/>
    <property type="match status" value="1"/>
</dbReference>
<dbReference type="SUPFAM" id="SSF46604">
    <property type="entry name" value="Epsilon subunit of F1F0-ATP synthase C-terminal domain"/>
    <property type="match status" value="1"/>
</dbReference>
<dbReference type="SUPFAM" id="SSF51344">
    <property type="entry name" value="Epsilon subunit of F1F0-ATP synthase N-terminal domain"/>
    <property type="match status" value="1"/>
</dbReference>
<sequence length="138" mass="14897">MNTIHVDVVSAEESIFSGEARFVALPGEAGELGIYPRHTPLITRIKPGAVRIEKEDGTEEFVFVAGGLLEVQPNCVTVLSDTAIRGKDLDETKASEAKAAAEEALKNARSDIDIAMAQSELTVMAAQIAALRKYRQKK</sequence>
<organism>
    <name type="scientific">Polaromonas sp. (strain JS666 / ATCC BAA-500)</name>
    <dbReference type="NCBI Taxonomy" id="296591"/>
    <lineage>
        <taxon>Bacteria</taxon>
        <taxon>Pseudomonadati</taxon>
        <taxon>Pseudomonadota</taxon>
        <taxon>Betaproteobacteria</taxon>
        <taxon>Burkholderiales</taxon>
        <taxon>Comamonadaceae</taxon>
        <taxon>Polaromonas</taxon>
    </lineage>
</organism>
<proteinExistence type="inferred from homology"/>
<comment type="function">
    <text evidence="1">Produces ATP from ADP in the presence of a proton gradient across the membrane.</text>
</comment>
<comment type="subunit">
    <text>F-type ATPases have 2 components, CF(1) - the catalytic core - and CF(0) - the membrane proton channel. CF(1) has five subunits: alpha(3), beta(3), gamma(1), delta(1), epsilon(1). CF(0) has three main subunits: a, b and c.</text>
</comment>
<comment type="subcellular location">
    <subcellularLocation>
        <location evidence="1">Cell inner membrane</location>
        <topology evidence="1">Peripheral membrane protein</topology>
    </subcellularLocation>
</comment>
<comment type="similarity">
    <text evidence="1">Belongs to the ATPase epsilon chain family.</text>
</comment>
<gene>
    <name evidence="1" type="primary">atpC</name>
    <name type="ordered locus">Bpro_0328</name>
</gene>
<keyword id="KW-0066">ATP synthesis</keyword>
<keyword id="KW-0997">Cell inner membrane</keyword>
<keyword id="KW-1003">Cell membrane</keyword>
<keyword id="KW-0139">CF(1)</keyword>
<keyword id="KW-0375">Hydrogen ion transport</keyword>
<keyword id="KW-0406">Ion transport</keyword>
<keyword id="KW-0472">Membrane</keyword>
<keyword id="KW-1185">Reference proteome</keyword>
<keyword id="KW-0813">Transport</keyword>
<reference key="1">
    <citation type="journal article" date="2008" name="Appl. Environ. Microbiol.">
        <title>The genome of Polaromonas sp. strain JS666: insights into the evolution of a hydrocarbon- and xenobiotic-degrading bacterium, and features of relevance to biotechnology.</title>
        <authorList>
            <person name="Mattes T.E."/>
            <person name="Alexander A.K."/>
            <person name="Richardson P.M."/>
            <person name="Munk A.C."/>
            <person name="Han C.S."/>
            <person name="Stothard P."/>
            <person name="Coleman N.V."/>
        </authorList>
    </citation>
    <scope>NUCLEOTIDE SEQUENCE [LARGE SCALE GENOMIC DNA]</scope>
    <source>
        <strain>JS666 / ATCC BAA-500</strain>
    </source>
</reference>
<feature type="chain" id="PRO_0000265856" description="ATP synthase epsilon chain">
    <location>
        <begin position="1"/>
        <end position="138"/>
    </location>
</feature>
<accession>Q12GP9</accession>
<protein>
    <recommendedName>
        <fullName evidence="1">ATP synthase epsilon chain</fullName>
    </recommendedName>
    <alternativeName>
        <fullName evidence="1">ATP synthase F1 sector epsilon subunit</fullName>
    </alternativeName>
    <alternativeName>
        <fullName evidence="1">F-ATPase epsilon subunit</fullName>
    </alternativeName>
</protein>
<evidence type="ECO:0000255" key="1">
    <source>
        <dbReference type="HAMAP-Rule" id="MF_00530"/>
    </source>
</evidence>